<sequence>MYVFLLFSRYKIFYVYIKKMAHRSRCNCNDTSNSNGSQHGINLPLRKIDTYDPCVNCRVKPHLCPKPHPCPKPENLEADIVIIGAGAAGCVLAYYLTKFSDLKIILLEAGHTHFNDPVVTDPMGFFGKYNPPNENIRMSQNPSYAWQPALEPDTGAYSMRNVVAHGLAVGGSTAINQLNYIVGGRTVFDNDWPTGWKYDDIKKYFRRVLADISPIRDGTKVNLTNTILESMRVLADQQVSSGVPVDFLINKATGGLPNIEQTYQGAPIVNLNDYEGINSVCGFKSYYVGVNQLSDGSYIRKYAGNTYLNSYYVDSNGFGIGKFSNLRVISDAVVDRIHFEGQRAVSVTYIDKKGNLHSVKVHKEVEICSGSFFTPTILQRSGIGDFSYLSSIGVPDLVYNNPLVGQGLRNHYSPITQVSVTGPDAAAFLSNTAAGPTI</sequence>
<gene>
    <name type="ordered locus">MIMI_L894</name>
</gene>
<organismHost>
    <name type="scientific">Acanthamoeba polyphaga</name>
    <name type="common">Amoeba</name>
    <dbReference type="NCBI Taxonomy" id="5757"/>
</organismHost>
<comment type="cofactor">
    <cofactor evidence="1">
        <name>FAD</name>
        <dbReference type="ChEBI" id="CHEBI:57692"/>
    </cofactor>
</comment>
<comment type="subcellular location">
    <subcellularLocation>
        <location evidence="3">Virion</location>
    </subcellularLocation>
</comment>
<comment type="similarity">
    <text evidence="4">Belongs to the GMC oxidoreductase family.</text>
</comment>
<comment type="caution">
    <text evidence="4">The two ORFs L894 and L893 correspond respectively to the N- and C-terminal of a GMC-type oxidoreductase.</text>
</comment>
<feature type="signal peptide" evidence="2">
    <location>
        <begin position="1"/>
        <end position="26"/>
    </location>
</feature>
<feature type="chain" id="PRO_0000243957" description="Putative truncated GMC-type inactive oxidoreductase L894">
    <location>
        <begin position="27"/>
        <end position="438"/>
    </location>
</feature>
<feature type="binding site" evidence="1">
    <location>
        <begin position="79"/>
        <end position="109"/>
    </location>
    <ligand>
        <name>FAD</name>
        <dbReference type="ChEBI" id="CHEBI:57692"/>
    </ligand>
</feature>
<name>YL894_MIMIV</name>
<organism>
    <name type="scientific">Acanthamoeba polyphaga mimivirus</name>
    <name type="common">APMV</name>
    <dbReference type="NCBI Taxonomy" id="212035"/>
    <lineage>
        <taxon>Viruses</taxon>
        <taxon>Varidnaviria</taxon>
        <taxon>Bamfordvirae</taxon>
        <taxon>Nucleocytoviricota</taxon>
        <taxon>Megaviricetes</taxon>
        <taxon>Imitervirales</taxon>
        <taxon>Mimiviridae</taxon>
        <taxon>Megamimivirinae</taxon>
        <taxon>Mimivirus</taxon>
        <taxon>Mimivirus bradfordmassiliense</taxon>
    </lineage>
</organism>
<evidence type="ECO:0000250" key="1"/>
<evidence type="ECO:0000255" key="2"/>
<evidence type="ECO:0000269" key="3">
    <source>
    </source>
</evidence>
<evidence type="ECO:0000305" key="4"/>
<dbReference type="EMBL" id="AY653733">
    <property type="protein sequence ID" value="AAV51151.1"/>
    <property type="molecule type" value="Genomic_DNA"/>
</dbReference>
<dbReference type="SMR" id="Q5UQZ1"/>
<dbReference type="Proteomes" id="UP000001134">
    <property type="component" value="Genome"/>
</dbReference>
<dbReference type="GO" id="GO:0044423">
    <property type="term" value="C:virion component"/>
    <property type="evidence" value="ECO:0007669"/>
    <property type="project" value="UniProtKB-KW"/>
</dbReference>
<dbReference type="GO" id="GO:0050660">
    <property type="term" value="F:flavin adenine dinucleotide binding"/>
    <property type="evidence" value="ECO:0007669"/>
    <property type="project" value="InterPro"/>
</dbReference>
<dbReference type="GO" id="GO:0016614">
    <property type="term" value="F:oxidoreductase activity, acting on CH-OH group of donors"/>
    <property type="evidence" value="ECO:0007669"/>
    <property type="project" value="InterPro"/>
</dbReference>
<dbReference type="Gene3D" id="3.50.50.60">
    <property type="entry name" value="FAD/NAD(P)-binding domain"/>
    <property type="match status" value="2"/>
</dbReference>
<dbReference type="InterPro" id="IPR036188">
    <property type="entry name" value="FAD/NAD-bd_sf"/>
</dbReference>
<dbReference type="InterPro" id="IPR012132">
    <property type="entry name" value="GMC_OxRdtase"/>
</dbReference>
<dbReference type="InterPro" id="IPR000172">
    <property type="entry name" value="GMC_OxRdtase_N"/>
</dbReference>
<dbReference type="PANTHER" id="PTHR11552">
    <property type="entry name" value="GLUCOSE-METHANOL-CHOLINE GMC OXIDOREDUCTASE"/>
    <property type="match status" value="1"/>
</dbReference>
<dbReference type="PANTHER" id="PTHR11552:SF111">
    <property type="entry name" value="GLUCOSE-METHANOL-CHOLINE OXIDOREDUCTASE N-TERMINAL DOMAIN-CONTAINING PROTEIN"/>
    <property type="match status" value="1"/>
</dbReference>
<dbReference type="Pfam" id="PF00732">
    <property type="entry name" value="GMC_oxred_N"/>
    <property type="match status" value="2"/>
</dbReference>
<dbReference type="SUPFAM" id="SSF51905">
    <property type="entry name" value="FAD/NAD(P)-binding domain"/>
    <property type="match status" value="1"/>
</dbReference>
<dbReference type="PROSITE" id="PS00624">
    <property type="entry name" value="GMC_OXRED_2"/>
    <property type="match status" value="1"/>
</dbReference>
<accession>Q5UQZ1</accession>
<reference key="1">
    <citation type="journal article" date="2004" name="Science">
        <title>The 1.2-megabase genome sequence of Mimivirus.</title>
        <authorList>
            <person name="Raoult D."/>
            <person name="Audic S."/>
            <person name="Robert C."/>
            <person name="Abergel C."/>
            <person name="Renesto P."/>
            <person name="Ogata H."/>
            <person name="La Scola B."/>
            <person name="Susan M."/>
            <person name="Claverie J.-M."/>
        </authorList>
    </citation>
    <scope>NUCLEOTIDE SEQUENCE [LARGE SCALE GENOMIC DNA]</scope>
    <source>
        <strain>Rowbotham-Bradford</strain>
    </source>
</reference>
<reference key="2">
    <citation type="journal article" date="2006" name="J. Virol.">
        <title>Mimivirus giant particles incorporate a large fraction of anonymous and unique gene products.</title>
        <authorList>
            <person name="Renesto P."/>
            <person name="Abergel C."/>
            <person name="Decloquement P."/>
            <person name="Moinier D."/>
            <person name="Azza S."/>
            <person name="Ogata H."/>
            <person name="Fourquet P."/>
            <person name="Gorvel J.-P."/>
            <person name="Claverie J.-M."/>
            <person name="Raoult D."/>
        </authorList>
    </citation>
    <scope>IDENTIFICATION BY MASS SPECTROMETRY [LARGE SCALE ANALYSIS]</scope>
    <scope>SUBCELLULAR LOCATION</scope>
</reference>
<protein>
    <recommendedName>
        <fullName>Putative truncated GMC-type inactive oxidoreductase L894</fullName>
    </recommendedName>
</protein>
<keyword id="KW-0274">FAD</keyword>
<keyword id="KW-0285">Flavoprotein</keyword>
<keyword id="KW-1185">Reference proteome</keyword>
<keyword id="KW-0732">Signal</keyword>
<keyword id="KW-0946">Virion</keyword>
<proteinExistence type="evidence at protein level"/>